<proteinExistence type="inferred from homology"/>
<name>RPIA_RHOP2</name>
<organism>
    <name type="scientific">Rhodopseudomonas palustris (strain HaA2)</name>
    <dbReference type="NCBI Taxonomy" id="316058"/>
    <lineage>
        <taxon>Bacteria</taxon>
        <taxon>Pseudomonadati</taxon>
        <taxon>Pseudomonadota</taxon>
        <taxon>Alphaproteobacteria</taxon>
        <taxon>Hyphomicrobiales</taxon>
        <taxon>Nitrobacteraceae</taxon>
        <taxon>Rhodopseudomonas</taxon>
    </lineage>
</organism>
<accession>Q2IUM8</accession>
<gene>
    <name evidence="1" type="primary">rpiA</name>
    <name type="ordered locus">RPB_3386</name>
</gene>
<keyword id="KW-0413">Isomerase</keyword>
<keyword id="KW-1185">Reference proteome</keyword>
<sequence length="232" mass="24675">MNKEDLKRQAAARALDEVRDGMKIGLGTGSTAKHFVELLGEKVRAGLDVIGVPTSEVTRADAERCGIRLTTLDEIDRLDLTVDGADEIDPRLELIKGGGGALLREKIVAAASDRMIVIADETKWVDCLGHFPLPVEVIPFGLAATRRAIEQACAEVGASGRLQLREGKDGHAFVTDGGHWIIDAHLGRIPDAPRLAQLLSAIPGVVEHGLFIGIASTVVLAGTDGIRTVERA</sequence>
<comment type="function">
    <text evidence="1">Catalyzes the reversible conversion of ribose-5-phosphate to ribulose 5-phosphate.</text>
</comment>
<comment type="catalytic activity">
    <reaction evidence="1">
        <text>aldehydo-D-ribose 5-phosphate = D-ribulose 5-phosphate</text>
        <dbReference type="Rhea" id="RHEA:14657"/>
        <dbReference type="ChEBI" id="CHEBI:58121"/>
        <dbReference type="ChEBI" id="CHEBI:58273"/>
        <dbReference type="EC" id="5.3.1.6"/>
    </reaction>
</comment>
<comment type="pathway">
    <text evidence="1">Carbohydrate degradation; pentose phosphate pathway; D-ribose 5-phosphate from D-ribulose 5-phosphate (non-oxidative stage): step 1/1.</text>
</comment>
<comment type="subunit">
    <text evidence="1">Homodimer.</text>
</comment>
<comment type="similarity">
    <text evidence="1">Belongs to the ribose 5-phosphate isomerase family.</text>
</comment>
<protein>
    <recommendedName>
        <fullName evidence="1">Ribose-5-phosphate isomerase A</fullName>
        <ecNumber evidence="1">5.3.1.6</ecNumber>
    </recommendedName>
    <alternativeName>
        <fullName evidence="1">Phosphoriboisomerase A</fullName>
        <shortName evidence="1">PRI</shortName>
    </alternativeName>
</protein>
<evidence type="ECO:0000255" key="1">
    <source>
        <dbReference type="HAMAP-Rule" id="MF_00170"/>
    </source>
</evidence>
<feature type="chain" id="PRO_1000016975" description="Ribose-5-phosphate isomerase A">
    <location>
        <begin position="1"/>
        <end position="232"/>
    </location>
</feature>
<feature type="active site" description="Proton acceptor" evidence="1">
    <location>
        <position position="105"/>
    </location>
</feature>
<feature type="binding site" evidence="1">
    <location>
        <begin position="28"/>
        <end position="31"/>
    </location>
    <ligand>
        <name>substrate</name>
    </ligand>
</feature>
<feature type="binding site" evidence="1">
    <location>
        <begin position="83"/>
        <end position="86"/>
    </location>
    <ligand>
        <name>substrate</name>
    </ligand>
</feature>
<feature type="binding site" evidence="1">
    <location>
        <begin position="96"/>
        <end position="99"/>
    </location>
    <ligand>
        <name>substrate</name>
    </ligand>
</feature>
<feature type="binding site" evidence="1">
    <location>
        <position position="123"/>
    </location>
    <ligand>
        <name>substrate</name>
    </ligand>
</feature>
<dbReference type="EC" id="5.3.1.6" evidence="1"/>
<dbReference type="EMBL" id="CP000250">
    <property type="protein sequence ID" value="ABD08082.1"/>
    <property type="molecule type" value="Genomic_DNA"/>
</dbReference>
<dbReference type="RefSeq" id="WP_011442266.1">
    <property type="nucleotide sequence ID" value="NC_007778.1"/>
</dbReference>
<dbReference type="SMR" id="Q2IUM8"/>
<dbReference type="STRING" id="316058.RPB_3386"/>
<dbReference type="KEGG" id="rpb:RPB_3386"/>
<dbReference type="eggNOG" id="COG0120">
    <property type="taxonomic scope" value="Bacteria"/>
</dbReference>
<dbReference type="HOGENOM" id="CLU_056590_1_0_5"/>
<dbReference type="OrthoDB" id="5870696at2"/>
<dbReference type="UniPathway" id="UPA00115">
    <property type="reaction ID" value="UER00412"/>
</dbReference>
<dbReference type="Proteomes" id="UP000008809">
    <property type="component" value="Chromosome"/>
</dbReference>
<dbReference type="GO" id="GO:0004751">
    <property type="term" value="F:ribose-5-phosphate isomerase activity"/>
    <property type="evidence" value="ECO:0007669"/>
    <property type="project" value="UniProtKB-UniRule"/>
</dbReference>
<dbReference type="GO" id="GO:0009052">
    <property type="term" value="P:pentose-phosphate shunt, non-oxidative branch"/>
    <property type="evidence" value="ECO:0007669"/>
    <property type="project" value="UniProtKB-UniRule"/>
</dbReference>
<dbReference type="CDD" id="cd01398">
    <property type="entry name" value="RPI_A"/>
    <property type="match status" value="1"/>
</dbReference>
<dbReference type="FunFam" id="3.40.50.1360:FF:000001">
    <property type="entry name" value="Ribose-5-phosphate isomerase A"/>
    <property type="match status" value="1"/>
</dbReference>
<dbReference type="Gene3D" id="3.30.70.260">
    <property type="match status" value="1"/>
</dbReference>
<dbReference type="Gene3D" id="3.40.50.1360">
    <property type="match status" value="1"/>
</dbReference>
<dbReference type="HAMAP" id="MF_00170">
    <property type="entry name" value="Rib_5P_isom_A"/>
    <property type="match status" value="1"/>
</dbReference>
<dbReference type="InterPro" id="IPR037171">
    <property type="entry name" value="NagB/RpiA_transferase-like"/>
</dbReference>
<dbReference type="InterPro" id="IPR050262">
    <property type="entry name" value="Ribose-5P_isomerase"/>
</dbReference>
<dbReference type="InterPro" id="IPR020672">
    <property type="entry name" value="Ribose5P_isomerase_typA_subgr"/>
</dbReference>
<dbReference type="InterPro" id="IPR004788">
    <property type="entry name" value="Ribose5P_isomerase_type_A"/>
</dbReference>
<dbReference type="NCBIfam" id="NF001924">
    <property type="entry name" value="PRK00702.1"/>
    <property type="match status" value="1"/>
</dbReference>
<dbReference type="NCBIfam" id="TIGR00021">
    <property type="entry name" value="rpiA"/>
    <property type="match status" value="1"/>
</dbReference>
<dbReference type="PANTHER" id="PTHR43748">
    <property type="entry name" value="RIBOSE-5-PHOSPHATE ISOMERASE 3, CHLOROPLASTIC-RELATED"/>
    <property type="match status" value="1"/>
</dbReference>
<dbReference type="PANTHER" id="PTHR43748:SF3">
    <property type="entry name" value="RIBOSE-5-PHOSPHATE ISOMERASE 3, CHLOROPLASTIC-RELATED"/>
    <property type="match status" value="1"/>
</dbReference>
<dbReference type="Pfam" id="PF06026">
    <property type="entry name" value="Rib_5-P_isom_A"/>
    <property type="match status" value="1"/>
</dbReference>
<dbReference type="SUPFAM" id="SSF75445">
    <property type="entry name" value="D-ribose-5-phosphate isomerase (RpiA), lid domain"/>
    <property type="match status" value="1"/>
</dbReference>
<dbReference type="SUPFAM" id="SSF100950">
    <property type="entry name" value="NagB/RpiA/CoA transferase-like"/>
    <property type="match status" value="1"/>
</dbReference>
<reference key="1">
    <citation type="submission" date="2006-01" db="EMBL/GenBank/DDBJ databases">
        <title>Complete sequence of Rhodopseudomonas palustris HaA2.</title>
        <authorList>
            <consortium name="US DOE Joint Genome Institute"/>
            <person name="Copeland A."/>
            <person name="Lucas S."/>
            <person name="Lapidus A."/>
            <person name="Barry K."/>
            <person name="Detter J.C."/>
            <person name="Glavina T."/>
            <person name="Hammon N."/>
            <person name="Israni S."/>
            <person name="Pitluck S."/>
            <person name="Chain P."/>
            <person name="Malfatti S."/>
            <person name="Shin M."/>
            <person name="Vergez L."/>
            <person name="Schmutz J."/>
            <person name="Larimer F."/>
            <person name="Land M."/>
            <person name="Hauser L."/>
            <person name="Pelletier D.A."/>
            <person name="Kyrpides N."/>
            <person name="Anderson I."/>
            <person name="Oda Y."/>
            <person name="Harwood C.S."/>
            <person name="Richardson P."/>
        </authorList>
    </citation>
    <scope>NUCLEOTIDE SEQUENCE [LARGE SCALE GENOMIC DNA]</scope>
    <source>
        <strain>HaA2</strain>
    </source>
</reference>